<protein>
    <recommendedName>
        <fullName>Uncharacterized SURF1-like protein Mb2259</fullName>
    </recommendedName>
</protein>
<keyword id="KW-1003">Cell membrane</keyword>
<keyword id="KW-0472">Membrane</keyword>
<keyword id="KW-1185">Reference proteome</keyword>
<keyword id="KW-0812">Transmembrane</keyword>
<keyword id="KW-1133">Transmembrane helix</keyword>
<comment type="subcellular location">
    <subcellularLocation>
        <location evidence="3">Cell membrane</location>
        <topology evidence="3">Multi-pass membrane protein</topology>
    </subcellularLocation>
</comment>
<comment type="similarity">
    <text evidence="3">Belongs to the SURF1 family.</text>
</comment>
<proteinExistence type="inferred from homology"/>
<name>Y2259_MYCBO</name>
<sequence>MPRLAFLLRPGWLALALVVVAFTYLCFTVLAPWQLGKNAKTSRENQQIRYSLDTPPVPLKTLLPQQDSSAPDAQWRRVTATGQYLPDVQVLARLRVVEGDQAFEVLAPFVVDGGPTVLVDRGYVRPQVGSHVPPIPRLPVQTVTITARLRDSEPSVAGKDPFVRDGFQQVYSINTGQVAALTGVQLAGSYLQLIEDQPGGLGVLGVPHLDPGPFLSYGIQWISFGILAPIGLGYFAYAEIRARRREKAGSPPPDKPMTVEQKLADRYGRRR</sequence>
<gene>
    <name type="ordered locus">BQ2027_MB2259</name>
</gene>
<reference key="1">
    <citation type="journal article" date="2003" name="Proc. Natl. Acad. Sci. U.S.A.">
        <title>The complete genome sequence of Mycobacterium bovis.</title>
        <authorList>
            <person name="Garnier T."/>
            <person name="Eiglmeier K."/>
            <person name="Camus J.-C."/>
            <person name="Medina N."/>
            <person name="Mansoor H."/>
            <person name="Pryor M."/>
            <person name="Duthoy S."/>
            <person name="Grondin S."/>
            <person name="Lacroix C."/>
            <person name="Monsempe C."/>
            <person name="Simon S."/>
            <person name="Harris B."/>
            <person name="Atkin R."/>
            <person name="Doggett J."/>
            <person name="Mayes R."/>
            <person name="Keating L."/>
            <person name="Wheeler P.R."/>
            <person name="Parkhill J."/>
            <person name="Barrell B.G."/>
            <person name="Cole S.T."/>
            <person name="Gordon S.V."/>
            <person name="Hewinson R.G."/>
        </authorList>
    </citation>
    <scope>NUCLEOTIDE SEQUENCE [LARGE SCALE GENOMIC DNA]</scope>
    <source>
        <strain>ATCC BAA-935 / AF2122/97</strain>
    </source>
</reference>
<reference key="2">
    <citation type="journal article" date="2017" name="Genome Announc.">
        <title>Updated reference genome sequence and annotation of Mycobacterium bovis AF2122/97.</title>
        <authorList>
            <person name="Malone K.M."/>
            <person name="Farrell D."/>
            <person name="Stuber T.P."/>
            <person name="Schubert O.T."/>
            <person name="Aebersold R."/>
            <person name="Robbe-Austerman S."/>
            <person name="Gordon S.V."/>
        </authorList>
    </citation>
    <scope>NUCLEOTIDE SEQUENCE [LARGE SCALE GENOMIC DNA]</scope>
    <scope>GENOME REANNOTATION</scope>
    <source>
        <strain>ATCC BAA-935 / AF2122/97</strain>
    </source>
</reference>
<dbReference type="EMBL" id="LT708304">
    <property type="protein sequence ID" value="SIU00869.1"/>
    <property type="molecule type" value="Genomic_DNA"/>
</dbReference>
<dbReference type="RefSeq" id="NP_855908.1">
    <property type="nucleotide sequence ID" value="NC_002945.3"/>
</dbReference>
<dbReference type="RefSeq" id="WP_003411514.1">
    <property type="nucleotide sequence ID" value="NC_002945.4"/>
</dbReference>
<dbReference type="KEGG" id="mbo:BQ2027_MB2259"/>
<dbReference type="PATRIC" id="fig|233413.5.peg.2479"/>
<dbReference type="Proteomes" id="UP000001419">
    <property type="component" value="Chromosome"/>
</dbReference>
<dbReference type="GO" id="GO:0005886">
    <property type="term" value="C:plasma membrane"/>
    <property type="evidence" value="ECO:0007669"/>
    <property type="project" value="UniProtKB-SubCell"/>
</dbReference>
<dbReference type="CDD" id="cd06662">
    <property type="entry name" value="SURF1"/>
    <property type="match status" value="1"/>
</dbReference>
<dbReference type="InterPro" id="IPR002994">
    <property type="entry name" value="Surf1/Shy1"/>
</dbReference>
<dbReference type="InterPro" id="IPR045214">
    <property type="entry name" value="Surf1/Surf4"/>
</dbReference>
<dbReference type="PANTHER" id="PTHR23427">
    <property type="entry name" value="SURFEIT LOCUS PROTEIN"/>
    <property type="match status" value="1"/>
</dbReference>
<dbReference type="PANTHER" id="PTHR23427:SF2">
    <property type="entry name" value="SURFEIT LOCUS PROTEIN 1"/>
    <property type="match status" value="1"/>
</dbReference>
<dbReference type="Pfam" id="PF02104">
    <property type="entry name" value="SURF1"/>
    <property type="match status" value="1"/>
</dbReference>
<dbReference type="PROSITE" id="PS50895">
    <property type="entry name" value="SURF1"/>
    <property type="match status" value="1"/>
</dbReference>
<organism>
    <name type="scientific">Mycobacterium bovis (strain ATCC BAA-935 / AF2122/97)</name>
    <dbReference type="NCBI Taxonomy" id="233413"/>
    <lineage>
        <taxon>Bacteria</taxon>
        <taxon>Bacillati</taxon>
        <taxon>Actinomycetota</taxon>
        <taxon>Actinomycetes</taxon>
        <taxon>Mycobacteriales</taxon>
        <taxon>Mycobacteriaceae</taxon>
        <taxon>Mycobacterium</taxon>
        <taxon>Mycobacterium tuberculosis complex</taxon>
    </lineage>
</organism>
<feature type="chain" id="PRO_0000215663" description="Uncharacterized SURF1-like protein Mb2259">
    <location>
        <begin position="1"/>
        <end position="271"/>
    </location>
</feature>
<feature type="transmembrane region" description="Helical" evidence="1">
    <location>
        <begin position="11"/>
        <end position="33"/>
    </location>
</feature>
<feature type="transmembrane region" description="Helical" evidence="1">
    <location>
        <begin position="172"/>
        <end position="194"/>
    </location>
</feature>
<feature type="transmembrane region" description="Helical" evidence="1">
    <location>
        <begin position="214"/>
        <end position="236"/>
    </location>
</feature>
<feature type="region of interest" description="Disordered" evidence="2">
    <location>
        <begin position="245"/>
        <end position="271"/>
    </location>
</feature>
<feature type="compositionally biased region" description="Basic and acidic residues" evidence="2">
    <location>
        <begin position="262"/>
        <end position="271"/>
    </location>
</feature>
<evidence type="ECO:0000255" key="1"/>
<evidence type="ECO:0000256" key="2">
    <source>
        <dbReference type="SAM" id="MobiDB-lite"/>
    </source>
</evidence>
<evidence type="ECO:0000305" key="3"/>
<accession>P66884</accession>
<accession>A0A1R3Y0M1</accession>
<accession>Q10517</accession>
<accession>X2BK64</accession>